<organism>
    <name type="scientific">Homo sapiens</name>
    <name type="common">Human</name>
    <dbReference type="NCBI Taxonomy" id="9606"/>
    <lineage>
        <taxon>Eukaryota</taxon>
        <taxon>Metazoa</taxon>
        <taxon>Chordata</taxon>
        <taxon>Craniata</taxon>
        <taxon>Vertebrata</taxon>
        <taxon>Euteleostomi</taxon>
        <taxon>Mammalia</taxon>
        <taxon>Eutheria</taxon>
        <taxon>Euarchontoglires</taxon>
        <taxon>Primates</taxon>
        <taxon>Haplorrhini</taxon>
        <taxon>Catarrhini</taxon>
        <taxon>Hominidae</taxon>
        <taxon>Homo</taxon>
    </lineage>
</organism>
<comment type="function">
    <text evidence="3 4 5 6">Catalyzes the pyridoxal-phosphate-dependent dehydrative deamination of L-threonine and L-serine to ammonia and alpha-ketobutyrate and pyruvate, respectively.</text>
</comment>
<comment type="catalytic activity">
    <reaction evidence="3 4 5 6">
        <text>L-serine = pyruvate + NH4(+)</text>
        <dbReference type="Rhea" id="RHEA:19169"/>
        <dbReference type="ChEBI" id="CHEBI:15361"/>
        <dbReference type="ChEBI" id="CHEBI:28938"/>
        <dbReference type="ChEBI" id="CHEBI:33384"/>
        <dbReference type="EC" id="4.3.1.17"/>
    </reaction>
</comment>
<comment type="catalytic activity">
    <reaction evidence="5 6">
        <text>L-threonine = 2-oxobutanoate + NH4(+)</text>
        <dbReference type="Rhea" id="RHEA:22108"/>
        <dbReference type="ChEBI" id="CHEBI:16763"/>
        <dbReference type="ChEBI" id="CHEBI:28938"/>
        <dbReference type="ChEBI" id="CHEBI:57926"/>
        <dbReference type="EC" id="4.3.1.19"/>
    </reaction>
</comment>
<comment type="cofactor">
    <cofactor evidence="4 5">
        <name>pyridoxal 5'-phosphate</name>
        <dbReference type="ChEBI" id="CHEBI:597326"/>
    </cofactor>
</comment>
<comment type="biophysicochemical properties">
    <kinetics>
        <KM evidence="6">23 mM for L-serine</KM>
        <KM evidence="5">67.3 mM for L-serine</KM>
        <KM evidence="3">50 mM for L-serine</KM>
        <KM evidence="6">31 mM for L-threonine</KM>
        <KM evidence="5">59.5 mM for L-threonine</KM>
        <KM evidence="3">57 mM for L-threonine</KM>
        <Vmax evidence="5">105.6 nmol/min/mg enzyme for L-serine</Vmax>
        <Vmax evidence="3">137.0 nmol/min/mg enzyme for L-serine</Vmax>
        <Vmax evidence="5">70.6 nmol/min/mg enzyme for L-threonine</Vmax>
        <Vmax evidence="3">96.0 nmol/min/mg enzyme for L-threonine</Vmax>
    </kinetics>
</comment>
<comment type="pathway">
    <text>Carbohydrate biosynthesis; gluconeogenesis.</text>
</comment>
<comment type="subunit">
    <text evidence="2 3 4 5">Homodimer.</text>
</comment>
<comment type="interaction">
    <interactant intactId="EBI-17859611">
        <id>P20132</id>
    </interactant>
    <interactant intactId="EBI-748248">
        <id>Q8WTU0</id>
        <label>DDI1</label>
    </interactant>
    <organismsDiffer>false</organismsDiffer>
    <experiments>3</experiments>
</comment>
<comment type="interaction">
    <interactant intactId="EBI-17859611">
        <id>P20132</id>
    </interactant>
    <interactant intactId="EBI-740220">
        <id>O14964</id>
        <label>HGS</label>
    </interactant>
    <organismsDiffer>false</organismsDiffer>
    <experiments>3</experiments>
</comment>
<comment type="interaction">
    <interactant intactId="EBI-17859611">
        <id>P20132</id>
    </interactant>
    <interactant intactId="EBI-12029034">
        <id>Q96PF1</id>
        <label>TGM7</label>
    </interactant>
    <organismsDiffer>false</organismsDiffer>
    <experiments>3</experiments>
</comment>
<comment type="subcellular location">
    <subcellularLocation>
        <location evidence="1">Cytoplasm</location>
    </subcellularLocation>
</comment>
<comment type="tissue specificity">
    <text evidence="3">Predominantly expressed in the perivenous regions of the liver.</text>
</comment>
<comment type="similarity">
    <text evidence="8">Belongs to the serine/threonine dehydratase family.</text>
</comment>
<proteinExistence type="evidence at protein level"/>
<sequence length="328" mass="34625">MMSGEPLHVKTPIRDSMALSKMAGTSVYLKMDSAQPSGSFKIRGIGHFCKRWAKQGCAHFVCSSAGNAGMAAAYAARQLGVPATIVVPSTTPALTIERLKNEGATVKVVGELLDEAFELAKALAKNNPGWVYIPPFDDPLIWEGHASIVKELKETLWEKPGAIALSVGGGGLLCGVVQGLQEVGWGDVPVIAMETFGAHSFHAATTAGKLVSLPKITSVAKALGVKTVGAQALKLFQEHPIFSEVISDQEAVAAIEKFVDDEKILVEPACGAALAAVYSHVIQKLQLEGNLRTPLPSLVVIVCGGSNISLAQLRALKEQLGMTNRLPK</sequence>
<keyword id="KW-0002">3D-structure</keyword>
<keyword id="KW-0963">Cytoplasm</keyword>
<keyword id="KW-0903">Direct protein sequencing</keyword>
<keyword id="KW-0312">Gluconeogenesis</keyword>
<keyword id="KW-0443">Lipid metabolism</keyword>
<keyword id="KW-0456">Lyase</keyword>
<keyword id="KW-1267">Proteomics identification</keyword>
<keyword id="KW-0663">Pyridoxal phosphate</keyword>
<keyword id="KW-1185">Reference proteome</keyword>
<feature type="chain" id="PRO_0000185594" description="L-serine dehydratase/L-threonine deaminase">
    <location>
        <begin position="1"/>
        <end position="328"/>
    </location>
</feature>
<feature type="binding site" evidence="5">
    <location>
        <position position="128"/>
    </location>
    <ligand>
        <name>pyridoxal 5'-phosphate</name>
        <dbReference type="ChEBI" id="CHEBI:597326"/>
    </ligand>
</feature>
<feature type="modified residue" description="N6-(pyridoxal phosphate)lysine" evidence="4">
    <location>
        <position position="41"/>
    </location>
</feature>
<feature type="mutagenesis site" description="Reduced Km and Vmax for both L-serine and L-threonine. 10-fold increase in dissociation constant for pyridoxal-phosphate." evidence="5">
    <location>
        <position position="128"/>
    </location>
</feature>
<feature type="mutagenesis site" description="Loss of enzyme activity." evidence="6">
    <original>C</original>
    <variation>A</variation>
    <location>
        <position position="303"/>
    </location>
</feature>
<feature type="sequence conflict" description="In Ref. 1; AAA36604." evidence="8" ref="1">
    <original>S</original>
    <variation>G</variation>
    <location>
        <position position="89"/>
    </location>
</feature>
<feature type="sequence conflict" description="In Ref. 1; AAA36604." evidence="8" ref="1">
    <original>V</original>
    <variation>C</variation>
    <location>
        <position position="106"/>
    </location>
</feature>
<feature type="sequence conflict" description="In Ref. 1; AAA36604." evidence="8" ref="1">
    <original>V</original>
    <variation>C</variation>
    <location>
        <position position="183"/>
    </location>
</feature>
<feature type="sequence conflict" description="In Ref. 1; AAA36604." evidence="8" ref="1">
    <original>A</original>
    <variation>S</variation>
    <location>
        <position position="230"/>
    </location>
</feature>
<feature type="sequence conflict" description="In Ref. 1; AAA36604." evidence="8" ref="1">
    <original>C</original>
    <variation>W</variation>
    <location>
        <position position="270"/>
    </location>
</feature>
<feature type="strand" evidence="10">
    <location>
        <begin position="13"/>
        <end position="16"/>
    </location>
</feature>
<feature type="helix" evidence="10">
    <location>
        <begin position="17"/>
        <end position="23"/>
    </location>
</feature>
<feature type="strand" evidence="10">
    <location>
        <begin position="25"/>
        <end position="31"/>
    </location>
</feature>
<feature type="helix" evidence="10">
    <location>
        <begin position="32"/>
        <end position="34"/>
    </location>
</feature>
<feature type="helix" evidence="9">
    <location>
        <begin position="36"/>
        <end position="38"/>
    </location>
</feature>
<feature type="helix" evidence="10">
    <location>
        <begin position="43"/>
        <end position="54"/>
    </location>
</feature>
<feature type="strand" evidence="10">
    <location>
        <begin position="59"/>
        <end position="62"/>
    </location>
</feature>
<feature type="helix" evidence="10">
    <location>
        <begin position="67"/>
        <end position="79"/>
    </location>
</feature>
<feature type="strand" evidence="10">
    <location>
        <begin position="83"/>
        <end position="88"/>
    </location>
</feature>
<feature type="helix" evidence="10">
    <location>
        <begin position="93"/>
        <end position="101"/>
    </location>
</feature>
<feature type="strand" evidence="10">
    <location>
        <begin position="105"/>
        <end position="109"/>
    </location>
</feature>
<feature type="helix" evidence="10">
    <location>
        <begin position="115"/>
        <end position="126"/>
    </location>
</feature>
<feature type="strand" evidence="10">
    <location>
        <begin position="130"/>
        <end position="133"/>
    </location>
</feature>
<feature type="helix" evidence="10">
    <location>
        <begin position="139"/>
        <end position="145"/>
    </location>
</feature>
<feature type="helix" evidence="10">
    <location>
        <begin position="147"/>
        <end position="155"/>
    </location>
</feature>
<feature type="strand" evidence="10">
    <location>
        <begin position="161"/>
        <end position="166"/>
    </location>
</feature>
<feature type="strand" evidence="10">
    <location>
        <begin position="168"/>
        <end position="170"/>
    </location>
</feature>
<feature type="helix" evidence="10">
    <location>
        <begin position="171"/>
        <end position="182"/>
    </location>
</feature>
<feature type="strand" evidence="10">
    <location>
        <begin position="190"/>
        <end position="195"/>
    </location>
</feature>
<feature type="helix" evidence="10">
    <location>
        <begin position="200"/>
        <end position="207"/>
    </location>
</feature>
<feature type="helix" evidence="10">
    <location>
        <begin position="221"/>
        <end position="223"/>
    </location>
</feature>
<feature type="helix" evidence="10">
    <location>
        <begin position="230"/>
        <end position="236"/>
    </location>
</feature>
<feature type="strand" evidence="10">
    <location>
        <begin position="241"/>
        <end position="246"/>
    </location>
</feature>
<feature type="helix" evidence="10">
    <location>
        <begin position="248"/>
        <end position="262"/>
    </location>
</feature>
<feature type="helix" evidence="10">
    <location>
        <begin position="268"/>
        <end position="278"/>
    </location>
</feature>
<feature type="helix" evidence="10">
    <location>
        <begin position="281"/>
        <end position="287"/>
    </location>
</feature>
<feature type="strand" evidence="10">
    <location>
        <begin position="297"/>
        <end position="302"/>
    </location>
</feature>
<feature type="helix" evidence="10">
    <location>
        <begin position="310"/>
        <end position="319"/>
    </location>
</feature>
<protein>
    <recommendedName>
        <fullName>L-serine dehydratase/L-threonine deaminase</fullName>
        <shortName>SDH</shortName>
        <ecNumber evidence="3 4 5 6">4.3.1.17</ecNumber>
    </recommendedName>
    <alternativeName>
        <fullName evidence="7">Hepatic serine dehydratase</fullName>
        <shortName evidence="7">hSDH</shortName>
    </alternativeName>
    <alternativeName>
        <fullName>L-serine deaminase</fullName>
    </alternativeName>
    <alternativeName>
        <fullName>L-threonine dehydratase</fullName>
        <shortName>TDH</shortName>
        <ecNumber evidence="5 6">4.3.1.19</ecNumber>
    </alternativeName>
</protein>
<dbReference type="EC" id="4.3.1.17" evidence="3 4 5 6"/>
<dbReference type="EC" id="4.3.1.19" evidence="5 6"/>
<dbReference type="EMBL" id="J05037">
    <property type="protein sequence ID" value="AAA36604.1"/>
    <property type="molecule type" value="mRNA"/>
</dbReference>
<dbReference type="EMBL" id="AK292760">
    <property type="protein sequence ID" value="BAF85449.1"/>
    <property type="molecule type" value="mRNA"/>
</dbReference>
<dbReference type="EMBL" id="CH471054">
    <property type="protein sequence ID" value="EAW98054.1"/>
    <property type="molecule type" value="Genomic_DNA"/>
</dbReference>
<dbReference type="CCDS" id="CCDS9169.1"/>
<dbReference type="PIR" id="A34232">
    <property type="entry name" value="DWHUT"/>
</dbReference>
<dbReference type="RefSeq" id="NP_006834.2">
    <property type="nucleotide sequence ID" value="NM_006843.2"/>
</dbReference>
<dbReference type="PDB" id="1P5J">
    <property type="method" value="X-ray"/>
    <property type="resolution" value="2.50 A"/>
    <property type="chains" value="A=1-328"/>
</dbReference>
<dbReference type="PDB" id="4H27">
    <property type="method" value="X-ray"/>
    <property type="resolution" value="1.30 A"/>
    <property type="chains" value="A=1-328"/>
</dbReference>
<dbReference type="PDBsum" id="1P5J"/>
<dbReference type="PDBsum" id="4H27"/>
<dbReference type="SMR" id="P20132"/>
<dbReference type="BioGRID" id="116189">
    <property type="interactions" value="8"/>
</dbReference>
<dbReference type="FunCoup" id="P20132">
    <property type="interactions" value="626"/>
</dbReference>
<dbReference type="IntAct" id="P20132">
    <property type="interactions" value="4"/>
</dbReference>
<dbReference type="STRING" id="9606.ENSP00000257549"/>
<dbReference type="DrugBank" id="DB00114">
    <property type="generic name" value="Pyridoxal phosphate"/>
</dbReference>
<dbReference type="DrugBank" id="DB00133">
    <property type="generic name" value="Serine"/>
</dbReference>
<dbReference type="GlyGen" id="P20132">
    <property type="glycosylation" value="2 sites"/>
</dbReference>
<dbReference type="iPTMnet" id="P20132"/>
<dbReference type="PhosphoSitePlus" id="P20132"/>
<dbReference type="BioMuta" id="SDS"/>
<dbReference type="DMDM" id="229462819"/>
<dbReference type="MassIVE" id="P20132"/>
<dbReference type="PaxDb" id="9606-ENSP00000257549"/>
<dbReference type="PeptideAtlas" id="P20132"/>
<dbReference type="ProteomicsDB" id="53724"/>
<dbReference type="Antibodypedia" id="31269">
    <property type="antibodies" value="270 antibodies from 18 providers"/>
</dbReference>
<dbReference type="DNASU" id="10993"/>
<dbReference type="Ensembl" id="ENST00000257549.9">
    <property type="protein sequence ID" value="ENSP00000257549.4"/>
    <property type="gene ID" value="ENSG00000135094.11"/>
</dbReference>
<dbReference type="GeneID" id="10993"/>
<dbReference type="KEGG" id="hsa:10993"/>
<dbReference type="MANE-Select" id="ENST00000257549.9">
    <property type="protein sequence ID" value="ENSP00000257549.4"/>
    <property type="RefSeq nucleotide sequence ID" value="NM_006843.3"/>
    <property type="RefSeq protein sequence ID" value="NP_006834.2"/>
</dbReference>
<dbReference type="UCSC" id="uc001tvg.4">
    <property type="organism name" value="human"/>
</dbReference>
<dbReference type="AGR" id="HGNC:10691"/>
<dbReference type="CTD" id="10993"/>
<dbReference type="DisGeNET" id="10993"/>
<dbReference type="GeneCards" id="SDS"/>
<dbReference type="HGNC" id="HGNC:10691">
    <property type="gene designation" value="SDS"/>
</dbReference>
<dbReference type="HPA" id="ENSG00000135094">
    <property type="expression patterns" value="Tissue enriched (liver)"/>
</dbReference>
<dbReference type="MIM" id="182128">
    <property type="type" value="gene"/>
</dbReference>
<dbReference type="neXtProt" id="NX_P20132"/>
<dbReference type="OpenTargets" id="ENSG00000135094"/>
<dbReference type="PharmGKB" id="PA35616"/>
<dbReference type="VEuPathDB" id="HostDB:ENSG00000135094"/>
<dbReference type="eggNOG" id="KOG1250">
    <property type="taxonomic scope" value="Eukaryota"/>
</dbReference>
<dbReference type="GeneTree" id="ENSGT00940000160172"/>
<dbReference type="HOGENOM" id="CLU_021152_3_0_1"/>
<dbReference type="InParanoid" id="P20132"/>
<dbReference type="OMA" id="AEQGCEH"/>
<dbReference type="OrthoDB" id="7773036at2759"/>
<dbReference type="PAN-GO" id="P20132">
    <property type="GO annotations" value="5 GO annotations based on evolutionary models"/>
</dbReference>
<dbReference type="PhylomeDB" id="P20132"/>
<dbReference type="TreeFam" id="TF329014"/>
<dbReference type="BioCyc" id="MetaCyc:HS05952-MONOMER"/>
<dbReference type="BRENDA" id="4.3.1.17">
    <property type="organism ID" value="2681"/>
</dbReference>
<dbReference type="PathwayCommons" id="P20132"/>
<dbReference type="Reactome" id="R-HSA-8849175">
    <property type="pathway name" value="Threonine catabolism"/>
</dbReference>
<dbReference type="SABIO-RK" id="P20132"/>
<dbReference type="SignaLink" id="P20132"/>
<dbReference type="UniPathway" id="UPA00138"/>
<dbReference type="BioGRID-ORCS" id="10993">
    <property type="hits" value="14 hits in 1158 CRISPR screens"/>
</dbReference>
<dbReference type="ChiTaRS" id="SDS">
    <property type="organism name" value="human"/>
</dbReference>
<dbReference type="EvolutionaryTrace" id="P20132"/>
<dbReference type="GenomeRNAi" id="10993"/>
<dbReference type="Pharos" id="P20132">
    <property type="development level" value="Tbio"/>
</dbReference>
<dbReference type="PRO" id="PR:P20132"/>
<dbReference type="Proteomes" id="UP000005640">
    <property type="component" value="Chromosome 12"/>
</dbReference>
<dbReference type="RNAct" id="P20132">
    <property type="molecule type" value="protein"/>
</dbReference>
<dbReference type="Bgee" id="ENSG00000135094">
    <property type="expression patterns" value="Expressed in right lobe of liver and 108 other cell types or tissues"/>
</dbReference>
<dbReference type="ExpressionAtlas" id="P20132">
    <property type="expression patterns" value="baseline and differential"/>
</dbReference>
<dbReference type="GO" id="GO:0005829">
    <property type="term" value="C:cytosol"/>
    <property type="evidence" value="ECO:0000314"/>
    <property type="project" value="HPA"/>
</dbReference>
<dbReference type="GO" id="GO:0005739">
    <property type="term" value="C:mitochondrion"/>
    <property type="evidence" value="ECO:0000314"/>
    <property type="project" value="HPA"/>
</dbReference>
<dbReference type="GO" id="GO:0003941">
    <property type="term" value="F:L-serine ammonia-lyase activity"/>
    <property type="evidence" value="ECO:0000314"/>
    <property type="project" value="UniProtKB"/>
</dbReference>
<dbReference type="GO" id="GO:0042803">
    <property type="term" value="F:protein homodimerization activity"/>
    <property type="evidence" value="ECO:0000314"/>
    <property type="project" value="UniProtKB"/>
</dbReference>
<dbReference type="GO" id="GO:0030170">
    <property type="term" value="F:pyridoxal phosphate binding"/>
    <property type="evidence" value="ECO:0000314"/>
    <property type="project" value="UniProtKB"/>
</dbReference>
<dbReference type="GO" id="GO:0004794">
    <property type="term" value="F:threonine deaminase activity"/>
    <property type="evidence" value="ECO:0000314"/>
    <property type="project" value="UniProtKB"/>
</dbReference>
<dbReference type="GO" id="GO:0006094">
    <property type="term" value="P:gluconeogenesis"/>
    <property type="evidence" value="ECO:0007669"/>
    <property type="project" value="UniProtKB-UniPathway"/>
</dbReference>
<dbReference type="GO" id="GO:0006565">
    <property type="term" value="P:L-serine catabolic process"/>
    <property type="evidence" value="ECO:0000314"/>
    <property type="project" value="UniProtKB"/>
</dbReference>
<dbReference type="GO" id="GO:0006629">
    <property type="term" value="P:lipid metabolic process"/>
    <property type="evidence" value="ECO:0007669"/>
    <property type="project" value="UniProtKB-KW"/>
</dbReference>
<dbReference type="GO" id="GO:0042866">
    <property type="term" value="P:pyruvate biosynthetic process"/>
    <property type="evidence" value="ECO:0000314"/>
    <property type="project" value="UniProtKB"/>
</dbReference>
<dbReference type="CDD" id="cd06448">
    <property type="entry name" value="L-Ser-dehyd"/>
    <property type="match status" value="1"/>
</dbReference>
<dbReference type="FunFam" id="3.40.50.1100:FF:000031">
    <property type="entry name" value="L-serine dehydratase/L-threonine deaminase"/>
    <property type="match status" value="1"/>
</dbReference>
<dbReference type="FunFam" id="3.40.50.1100:FF:000106">
    <property type="entry name" value="L-serine dehydratase/L-threonine deaminase"/>
    <property type="match status" value="1"/>
</dbReference>
<dbReference type="Gene3D" id="3.40.50.1100">
    <property type="match status" value="2"/>
</dbReference>
<dbReference type="InterPro" id="IPR050147">
    <property type="entry name" value="Ser/Thr_Dehydratase"/>
</dbReference>
<dbReference type="InterPro" id="IPR000634">
    <property type="entry name" value="Ser/Thr_deHydtase_PyrdxlP-BS"/>
</dbReference>
<dbReference type="InterPro" id="IPR001926">
    <property type="entry name" value="TrpB-like_PALP"/>
</dbReference>
<dbReference type="InterPro" id="IPR036052">
    <property type="entry name" value="TrpB-like_PALP_sf"/>
</dbReference>
<dbReference type="PANTHER" id="PTHR48078:SF8">
    <property type="entry name" value="L-SERINE DEHYDRATASE_L-THREONINE DEAMINASE"/>
    <property type="match status" value="1"/>
</dbReference>
<dbReference type="PANTHER" id="PTHR48078">
    <property type="entry name" value="THREONINE DEHYDRATASE, MITOCHONDRIAL-RELATED"/>
    <property type="match status" value="1"/>
</dbReference>
<dbReference type="Pfam" id="PF00291">
    <property type="entry name" value="PALP"/>
    <property type="match status" value="1"/>
</dbReference>
<dbReference type="SUPFAM" id="SSF53686">
    <property type="entry name" value="Tryptophan synthase beta subunit-like PLP-dependent enzymes"/>
    <property type="match status" value="1"/>
</dbReference>
<dbReference type="PROSITE" id="PS00165">
    <property type="entry name" value="DEHYDRATASE_SER_THR"/>
    <property type="match status" value="1"/>
</dbReference>
<name>SDHL_HUMAN</name>
<accession>P20132</accession>
<accession>A8K9P5</accession>
<evidence type="ECO:0000250" key="1">
    <source>
        <dbReference type="UniProtKB" id="P09367"/>
    </source>
</evidence>
<evidence type="ECO:0000269" key="2">
    <source>
    </source>
</evidence>
<evidence type="ECO:0000269" key="3">
    <source>
    </source>
</evidence>
<evidence type="ECO:0000269" key="4">
    <source>
    </source>
</evidence>
<evidence type="ECO:0000269" key="5">
    <source>
    </source>
</evidence>
<evidence type="ECO:0000269" key="6">
    <source>
    </source>
</evidence>
<evidence type="ECO:0000303" key="7">
    <source>
    </source>
</evidence>
<evidence type="ECO:0000305" key="8"/>
<evidence type="ECO:0007829" key="9">
    <source>
        <dbReference type="PDB" id="1P5J"/>
    </source>
</evidence>
<evidence type="ECO:0007829" key="10">
    <source>
        <dbReference type="PDB" id="4H27"/>
    </source>
</evidence>
<reference key="1">
    <citation type="journal article" date="1989" name="J. Biol. Chem.">
        <title>Human liver serine dehydratase. cDNA cloning and sequence homology with hydroxyamino acid dehydratases from other sources.</title>
        <authorList>
            <person name="Ogawa H."/>
            <person name="Gomi T."/>
            <person name="Konishi K."/>
            <person name="Date T."/>
            <person name="Nakashima H."/>
            <person name="Nose K."/>
            <person name="Matsuda Y."/>
            <person name="Peraino C."/>
            <person name="Pitot H.C."/>
            <person name="Fujioka M."/>
        </authorList>
    </citation>
    <scope>NUCLEOTIDE SEQUENCE [MRNA]</scope>
    <source>
        <tissue>Liver</tissue>
    </source>
</reference>
<reference key="2">
    <citation type="journal article" date="2004" name="Nat. Genet.">
        <title>Complete sequencing and characterization of 21,243 full-length human cDNAs.</title>
        <authorList>
            <person name="Ota T."/>
            <person name="Suzuki Y."/>
            <person name="Nishikawa T."/>
            <person name="Otsuki T."/>
            <person name="Sugiyama T."/>
            <person name="Irie R."/>
            <person name="Wakamatsu A."/>
            <person name="Hayashi K."/>
            <person name="Sato H."/>
            <person name="Nagai K."/>
            <person name="Kimura K."/>
            <person name="Makita H."/>
            <person name="Sekine M."/>
            <person name="Obayashi M."/>
            <person name="Nishi T."/>
            <person name="Shibahara T."/>
            <person name="Tanaka T."/>
            <person name="Ishii S."/>
            <person name="Yamamoto J."/>
            <person name="Saito K."/>
            <person name="Kawai Y."/>
            <person name="Isono Y."/>
            <person name="Nakamura Y."/>
            <person name="Nagahari K."/>
            <person name="Murakami K."/>
            <person name="Yasuda T."/>
            <person name="Iwayanagi T."/>
            <person name="Wagatsuma M."/>
            <person name="Shiratori A."/>
            <person name="Sudo H."/>
            <person name="Hosoiri T."/>
            <person name="Kaku Y."/>
            <person name="Kodaira H."/>
            <person name="Kondo H."/>
            <person name="Sugawara M."/>
            <person name="Takahashi M."/>
            <person name="Kanda K."/>
            <person name="Yokoi T."/>
            <person name="Furuya T."/>
            <person name="Kikkawa E."/>
            <person name="Omura Y."/>
            <person name="Abe K."/>
            <person name="Kamihara K."/>
            <person name="Katsuta N."/>
            <person name="Sato K."/>
            <person name="Tanikawa M."/>
            <person name="Yamazaki M."/>
            <person name="Ninomiya K."/>
            <person name="Ishibashi T."/>
            <person name="Yamashita H."/>
            <person name="Murakawa K."/>
            <person name="Fujimori K."/>
            <person name="Tanai H."/>
            <person name="Kimata M."/>
            <person name="Watanabe M."/>
            <person name="Hiraoka S."/>
            <person name="Chiba Y."/>
            <person name="Ishida S."/>
            <person name="Ono Y."/>
            <person name="Takiguchi S."/>
            <person name="Watanabe S."/>
            <person name="Yosida M."/>
            <person name="Hotuta T."/>
            <person name="Kusano J."/>
            <person name="Kanehori K."/>
            <person name="Takahashi-Fujii A."/>
            <person name="Hara H."/>
            <person name="Tanase T.-O."/>
            <person name="Nomura Y."/>
            <person name="Togiya S."/>
            <person name="Komai F."/>
            <person name="Hara R."/>
            <person name="Takeuchi K."/>
            <person name="Arita M."/>
            <person name="Imose N."/>
            <person name="Musashino K."/>
            <person name="Yuuki H."/>
            <person name="Oshima A."/>
            <person name="Sasaki N."/>
            <person name="Aotsuka S."/>
            <person name="Yoshikawa Y."/>
            <person name="Matsunawa H."/>
            <person name="Ichihara T."/>
            <person name="Shiohata N."/>
            <person name="Sano S."/>
            <person name="Moriya S."/>
            <person name="Momiyama H."/>
            <person name="Satoh N."/>
            <person name="Takami S."/>
            <person name="Terashima Y."/>
            <person name="Suzuki O."/>
            <person name="Nakagawa S."/>
            <person name="Senoh A."/>
            <person name="Mizoguchi H."/>
            <person name="Goto Y."/>
            <person name="Shimizu F."/>
            <person name="Wakebe H."/>
            <person name="Hishigaki H."/>
            <person name="Watanabe T."/>
            <person name="Sugiyama A."/>
            <person name="Takemoto M."/>
            <person name="Kawakami B."/>
            <person name="Yamazaki M."/>
            <person name="Watanabe K."/>
            <person name="Kumagai A."/>
            <person name="Itakura S."/>
            <person name="Fukuzumi Y."/>
            <person name="Fujimori Y."/>
            <person name="Komiyama M."/>
            <person name="Tashiro H."/>
            <person name="Tanigami A."/>
            <person name="Fujiwara T."/>
            <person name="Ono T."/>
            <person name="Yamada K."/>
            <person name="Fujii Y."/>
            <person name="Ozaki K."/>
            <person name="Hirao M."/>
            <person name="Ohmori Y."/>
            <person name="Kawabata A."/>
            <person name="Hikiji T."/>
            <person name="Kobatake N."/>
            <person name="Inagaki H."/>
            <person name="Ikema Y."/>
            <person name="Okamoto S."/>
            <person name="Okitani R."/>
            <person name="Kawakami T."/>
            <person name="Noguchi S."/>
            <person name="Itoh T."/>
            <person name="Shigeta K."/>
            <person name="Senba T."/>
            <person name="Matsumura K."/>
            <person name="Nakajima Y."/>
            <person name="Mizuno T."/>
            <person name="Morinaga M."/>
            <person name="Sasaki M."/>
            <person name="Togashi T."/>
            <person name="Oyama M."/>
            <person name="Hata H."/>
            <person name="Watanabe M."/>
            <person name="Komatsu T."/>
            <person name="Mizushima-Sugano J."/>
            <person name="Satoh T."/>
            <person name="Shirai Y."/>
            <person name="Takahashi Y."/>
            <person name="Nakagawa K."/>
            <person name="Okumura K."/>
            <person name="Nagase T."/>
            <person name="Nomura N."/>
            <person name="Kikuchi H."/>
            <person name="Masuho Y."/>
            <person name="Yamashita R."/>
            <person name="Nakai K."/>
            <person name="Yada T."/>
            <person name="Nakamura Y."/>
            <person name="Ohara O."/>
            <person name="Isogai T."/>
            <person name="Sugano S."/>
        </authorList>
    </citation>
    <scope>NUCLEOTIDE SEQUENCE [LARGE SCALE MRNA]</scope>
    <source>
        <tissue>Lung</tissue>
    </source>
</reference>
<reference key="3">
    <citation type="submission" date="2005-07" db="EMBL/GenBank/DDBJ databases">
        <authorList>
            <person name="Mural R.J."/>
            <person name="Istrail S."/>
            <person name="Sutton G.G."/>
            <person name="Florea L."/>
            <person name="Halpern A.L."/>
            <person name="Mobarry C.M."/>
            <person name="Lippert R."/>
            <person name="Walenz B."/>
            <person name="Shatkay H."/>
            <person name="Dew I."/>
            <person name="Miller J.R."/>
            <person name="Flanigan M.J."/>
            <person name="Edwards N.J."/>
            <person name="Bolanos R."/>
            <person name="Fasulo D."/>
            <person name="Halldorsson B.V."/>
            <person name="Hannenhalli S."/>
            <person name="Turner R."/>
            <person name="Yooseph S."/>
            <person name="Lu F."/>
            <person name="Nusskern D.R."/>
            <person name="Shue B.C."/>
            <person name="Zheng X.H."/>
            <person name="Zhong F."/>
            <person name="Delcher A.L."/>
            <person name="Huson D.H."/>
            <person name="Kravitz S.A."/>
            <person name="Mouchard L."/>
            <person name="Reinert K."/>
            <person name="Remington K.A."/>
            <person name="Clark A.G."/>
            <person name="Waterman M.S."/>
            <person name="Eichler E.E."/>
            <person name="Adams M.D."/>
            <person name="Hunkapiller M.W."/>
            <person name="Myers E.W."/>
            <person name="Venter J.C."/>
        </authorList>
    </citation>
    <scope>NUCLEOTIDE SEQUENCE [LARGE SCALE GENOMIC DNA]</scope>
</reference>
<reference key="4">
    <citation type="journal article" date="2005" name="Int. J. Biochem. Cell Biol.">
        <title>Some biochemical and histochemical properties of human liver serine dehydratase.</title>
        <authorList>
            <person name="Kashii T."/>
            <person name="Gomi T."/>
            <person name="Oya T."/>
            <person name="Ishii Y."/>
            <person name="Oda H."/>
            <person name="Maruyama M."/>
            <person name="Kobayashi M."/>
            <person name="Masuda T."/>
            <person name="Yamazaki M."/>
            <person name="Nagata T."/>
            <person name="Tsukada K."/>
            <person name="Nakajima A."/>
            <person name="Tatsu K."/>
            <person name="Mori H."/>
            <person name="Takusagawa F."/>
            <person name="Ogawa H."/>
            <person name="Pitot H.C."/>
        </authorList>
    </citation>
    <scope>PROTEIN SEQUENCE OF 1-10</scope>
    <scope>IDENTIFICATION BY MASS SPECTROMETRY</scope>
    <scope>FUNCTION</scope>
    <scope>CATALYTIC ACTIVITY</scope>
    <scope>BIOPHYSICOCHEMICAL PROPERTIES</scope>
    <scope>SUBUNIT</scope>
    <scope>TISSUE SPECIFICITY</scope>
</reference>
<reference key="5">
    <citation type="journal article" date="2006" name="Biochim. Biophys. Acta">
        <title>Enzymatic and biochemical properties of a novel human serine dehydratase isoform.</title>
        <authorList>
            <person name="Ogawa H."/>
            <person name="Gomi T."/>
            <person name="Nishizawa M."/>
            <person name="Hayakawa Y."/>
            <person name="Endo S."/>
            <person name="Hayashi K."/>
            <person name="Ochiai H."/>
            <person name="Takusagawa F."/>
            <person name="Pitot H.C."/>
            <person name="Mori H."/>
            <person name="Sakurai H."/>
            <person name="Koizumi K."/>
            <person name="Saiki I."/>
            <person name="Oda H."/>
            <person name="Fujishita T."/>
            <person name="Miwa T."/>
            <person name="Maruyama M."/>
            <person name="Kobayashi M."/>
        </authorList>
    </citation>
    <scope>FUNCTION</scope>
    <scope>CATALYTIC ACTIVITY</scope>
    <scope>BIOPHYSICOCHEMICAL PROPERTIES</scope>
    <scope>COFACTOR</scope>
    <scope>SUBUNIT</scope>
    <scope>BINDING</scope>
    <scope>MUTAGENESIS OF PRO-128</scope>
</reference>
<reference key="6">
    <citation type="journal article" date="2008" name="Biochim. Biophys. Acta">
        <title>A catalytic mechanism that explains a low catalytic activity of serine dehydratase like-1 from human cancer cells: crystal structure and site-directed mutagenesis studies.</title>
        <authorList>
            <person name="Yamada T."/>
            <person name="Komoto J."/>
            <person name="Kasuya T."/>
            <person name="Takata Y."/>
            <person name="Ogawa H."/>
            <person name="Mori H."/>
            <person name="Takusagawa F."/>
        </authorList>
    </citation>
    <scope>CATALYTIC ACTIVITY</scope>
    <scope>MUTAGENESIS OF CYS-303</scope>
    <scope>BIOPHYSICOCHEMICAL PROPERTIES</scope>
    <scope>FUNCTION</scope>
</reference>
<reference key="7">
    <citation type="journal article" date="2014" name="J. Proteomics">
        <title>An enzyme assisted RP-RPLC approach for in-depth analysis of human liver phosphoproteome.</title>
        <authorList>
            <person name="Bian Y."/>
            <person name="Song C."/>
            <person name="Cheng K."/>
            <person name="Dong M."/>
            <person name="Wang F."/>
            <person name="Huang J."/>
            <person name="Sun D."/>
            <person name="Wang L."/>
            <person name="Ye M."/>
            <person name="Zou H."/>
        </authorList>
    </citation>
    <scope>IDENTIFICATION BY MASS SPECTROMETRY [LARGE SCALE ANALYSIS]</scope>
    <source>
        <tissue>Liver</tissue>
    </source>
</reference>
<reference key="8">
    <citation type="journal article" date="2003" name="Acta Crystallogr. D">
        <title>Crystallization and preliminary crystallographic analysis of human serine dehydratase.</title>
        <authorList>
            <person name="Sun L."/>
            <person name="Li X."/>
            <person name="Dong Y."/>
            <person name="Yang M."/>
            <person name="Liu Y."/>
            <person name="Han X."/>
            <person name="Zhang X."/>
            <person name="Pang H."/>
            <person name="Rao Z."/>
        </authorList>
    </citation>
    <scope>X-RAY CRYSTALLOGRAPHY (2.5 ANGSTROMS) IN COMPLEX WITH PYRIDOXAL PHOSPHATE</scope>
    <scope>SUBUNIT</scope>
</reference>
<reference key="9">
    <citation type="journal article" date="2005" name="Protein Sci.">
        <title>Crystal structure of the pyridoxal-5'-phosphate-dependent serine dehydratase from human liver.</title>
        <authorList>
            <person name="Sun L."/>
            <person name="Bartlam M."/>
            <person name="Liu Y."/>
            <person name="Pang H."/>
            <person name="Rao Z."/>
        </authorList>
    </citation>
    <scope>X-RAY CRYSTALLOGRAPHY (2.5 ANGSTROMS) IN COMPLEX WITH PYRIDOXAL PHOSPHATE</scope>
    <scope>FUNCTION</scope>
    <scope>CATALYTIC ACTIVITY</scope>
    <scope>SUBUNIT</scope>
    <scope>COFACTOR</scope>
</reference>
<gene>
    <name type="primary">SDS</name>
    <name type="synonym">SDH</name>
</gene>